<feature type="chain" id="PRO_0000124762" description="Membrane protein insertase YidC">
    <location>
        <begin position="1"/>
        <end position="310"/>
    </location>
</feature>
<feature type="transmembrane region" description="Helical" evidence="2">
    <location>
        <begin position="16"/>
        <end position="36"/>
    </location>
</feature>
<feature type="transmembrane region" description="Helical" evidence="2">
    <location>
        <begin position="44"/>
        <end position="64"/>
    </location>
</feature>
<feature type="transmembrane region" description="Helical" evidence="2">
    <location>
        <begin position="115"/>
        <end position="135"/>
    </location>
</feature>
<feature type="transmembrane region" description="Helical" evidence="2">
    <location>
        <begin position="186"/>
        <end position="206"/>
    </location>
</feature>
<feature type="transmembrane region" description="Helical" evidence="2">
    <location>
        <begin position="232"/>
        <end position="252"/>
    </location>
</feature>
<feature type="region of interest" description="Disordered" evidence="3">
    <location>
        <begin position="290"/>
        <end position="310"/>
    </location>
</feature>
<protein>
    <recommendedName>
        <fullName>Membrane protein insertase YidC</fullName>
    </recommendedName>
    <alternativeName>
        <fullName>Foldase YidC</fullName>
    </alternativeName>
    <alternativeName>
        <fullName>Membrane integrase YidC</fullName>
    </alternativeName>
    <alternativeName>
        <fullName>Membrane protein YidC</fullName>
    </alternativeName>
</protein>
<sequence>MFDGLFDFLQNILLPIKWVIEQILVFFHTLLGFLGFGDKSGLSWALSIVGLVIVIRATLIPVFLKQIRAQRKMLEIAPEVRRIQEKYKGKRDVLSRQSMNQEMMEIYRVRGANPLSSCLPIVLQMPVFFGLYQVIESAQNAGTGVGPLNGPLGMDFRDSRIFGVVPLHDSFSHDFYALQAGQAFNLITMIVAGVLTAIMIAVQLFTQLKVIPKNIPENAKNTSVYKNQKVMLYLLPIMFLGMGFSFPVGILIYWTASNVWSGVQQAVAIYRNPSPGSLAFELRRKRLGVQNKKTKGQRQQPVNKRRAKRR</sequence>
<gene>
    <name type="primary">yidC</name>
    <name type="ordered locus">TW815</name>
</gene>
<reference key="1">
    <citation type="journal article" date="2003" name="Lancet">
        <title>Sequencing and analysis of the genome of the Whipple's disease bacterium Tropheryma whipplei.</title>
        <authorList>
            <person name="Bentley S.D."/>
            <person name="Maiwald M."/>
            <person name="Murphy L.D."/>
            <person name="Pallen M.J."/>
            <person name="Yeats C.A."/>
            <person name="Dover L.G."/>
            <person name="Norbertczak H.T."/>
            <person name="Besra G.S."/>
            <person name="Quail M.A."/>
            <person name="Harris D.E."/>
            <person name="von Herbay A."/>
            <person name="Goble A."/>
            <person name="Rutter S."/>
            <person name="Squares R."/>
            <person name="Squares S."/>
            <person name="Barrell B.G."/>
            <person name="Parkhill J."/>
            <person name="Relman D.A."/>
        </authorList>
    </citation>
    <scope>NUCLEOTIDE SEQUENCE [LARGE SCALE GENOMIC DNA]</scope>
    <source>
        <strain>TW08/27</strain>
    </source>
</reference>
<comment type="function">
    <text evidence="1">Required for the insertion and/or proper folding and/or complex formation of integral membrane proteins into the membrane. Involved in integration of membrane proteins that insert both dependently and independently of the Sec translocase complex, as well as at least some lipoproteins. Aids folding of multispanning membrane proteins (By similarity).</text>
</comment>
<comment type="subunit">
    <text evidence="1">Interacts with the Sec translocase complex via SecD. Specifically interacts with transmembrane segments of nascent integral membrane proteins during membrane integration (By similarity).</text>
</comment>
<comment type="subcellular location">
    <subcellularLocation>
        <location evidence="1">Cell membrane</location>
        <topology evidence="1">Multi-pass membrane protein</topology>
    </subcellularLocation>
</comment>
<comment type="similarity">
    <text evidence="4">Belongs to the OXA1/ALB3/YidC family. Type 1 subfamily.</text>
</comment>
<organism>
    <name type="scientific">Tropheryma whipplei (strain TW08/27)</name>
    <name type="common">Whipple's bacillus</name>
    <dbReference type="NCBI Taxonomy" id="218496"/>
    <lineage>
        <taxon>Bacteria</taxon>
        <taxon>Bacillati</taxon>
        <taxon>Actinomycetota</taxon>
        <taxon>Actinomycetes</taxon>
        <taxon>Micrococcales</taxon>
        <taxon>Tropherymataceae</taxon>
        <taxon>Tropheryma</taxon>
    </lineage>
</organism>
<dbReference type="EMBL" id="BX251412">
    <property type="protein sequence ID" value="CAD67474.1"/>
    <property type="molecule type" value="Genomic_DNA"/>
</dbReference>
<dbReference type="RefSeq" id="WP_011096752.1">
    <property type="nucleotide sequence ID" value="NC_004551.1"/>
</dbReference>
<dbReference type="GeneID" id="67388595"/>
<dbReference type="KEGG" id="tws:TW815"/>
<dbReference type="HOGENOM" id="CLU_036138_3_1_11"/>
<dbReference type="GO" id="GO:0005886">
    <property type="term" value="C:plasma membrane"/>
    <property type="evidence" value="ECO:0007669"/>
    <property type="project" value="UniProtKB-SubCell"/>
</dbReference>
<dbReference type="GO" id="GO:0032977">
    <property type="term" value="F:membrane insertase activity"/>
    <property type="evidence" value="ECO:0007669"/>
    <property type="project" value="InterPro"/>
</dbReference>
<dbReference type="GO" id="GO:0051205">
    <property type="term" value="P:protein insertion into membrane"/>
    <property type="evidence" value="ECO:0007669"/>
    <property type="project" value="TreeGrafter"/>
</dbReference>
<dbReference type="GO" id="GO:0015031">
    <property type="term" value="P:protein transport"/>
    <property type="evidence" value="ECO:0007669"/>
    <property type="project" value="UniProtKB-KW"/>
</dbReference>
<dbReference type="CDD" id="cd20070">
    <property type="entry name" value="5TM_YidC_Alb3"/>
    <property type="match status" value="1"/>
</dbReference>
<dbReference type="InterPro" id="IPR001708">
    <property type="entry name" value="YidC/ALB3/OXA1/COX18"/>
</dbReference>
<dbReference type="InterPro" id="IPR028055">
    <property type="entry name" value="YidC/Oxa/ALB_C"/>
</dbReference>
<dbReference type="InterPro" id="IPR047196">
    <property type="entry name" value="YidC_ALB_C"/>
</dbReference>
<dbReference type="NCBIfam" id="NF002350">
    <property type="entry name" value="PRK01315.1"/>
    <property type="match status" value="1"/>
</dbReference>
<dbReference type="NCBIfam" id="TIGR03592">
    <property type="entry name" value="yidC_oxa1_cterm"/>
    <property type="match status" value="1"/>
</dbReference>
<dbReference type="PANTHER" id="PTHR12428:SF65">
    <property type="entry name" value="CYTOCHROME C OXIDASE ASSEMBLY PROTEIN COX18, MITOCHONDRIAL"/>
    <property type="match status" value="1"/>
</dbReference>
<dbReference type="PANTHER" id="PTHR12428">
    <property type="entry name" value="OXA1"/>
    <property type="match status" value="1"/>
</dbReference>
<dbReference type="Pfam" id="PF02096">
    <property type="entry name" value="60KD_IMP"/>
    <property type="match status" value="1"/>
</dbReference>
<keyword id="KW-1003">Cell membrane</keyword>
<keyword id="KW-0143">Chaperone</keyword>
<keyword id="KW-0472">Membrane</keyword>
<keyword id="KW-0653">Protein transport</keyword>
<keyword id="KW-0812">Transmembrane</keyword>
<keyword id="KW-1133">Transmembrane helix</keyword>
<keyword id="KW-0813">Transport</keyword>
<name>YIDC_TROW8</name>
<proteinExistence type="inferred from homology"/>
<accession>Q83N53</accession>
<evidence type="ECO:0000250" key="1"/>
<evidence type="ECO:0000255" key="2"/>
<evidence type="ECO:0000256" key="3">
    <source>
        <dbReference type="SAM" id="MobiDB-lite"/>
    </source>
</evidence>
<evidence type="ECO:0000305" key="4"/>